<feature type="chain" id="PRO_0000134649" description="Orotidine 5'-phosphate decarboxylase">
    <location>
        <begin position="1"/>
        <end position="265"/>
    </location>
</feature>
<feature type="active site" description="Proton donor" evidence="2">
    <location>
        <position position="93"/>
    </location>
</feature>
<feature type="binding site" evidence="1">
    <location>
        <position position="37"/>
    </location>
    <ligand>
        <name>substrate</name>
    </ligand>
</feature>
<feature type="binding site" evidence="1">
    <location>
        <begin position="59"/>
        <end position="61"/>
    </location>
    <ligand>
        <name>substrate</name>
    </ligand>
</feature>
<feature type="binding site" evidence="1">
    <location>
        <begin position="91"/>
        <end position="100"/>
    </location>
    <ligand>
        <name>substrate</name>
    </ligand>
</feature>
<feature type="binding site" evidence="1">
    <location>
        <position position="217"/>
    </location>
    <ligand>
        <name>substrate</name>
    </ligand>
</feature>
<feature type="binding site" evidence="1">
    <location>
        <position position="235"/>
    </location>
    <ligand>
        <name>substrate</name>
    </ligand>
</feature>
<reference key="1">
    <citation type="journal article" date="1994" name="Gene">
        <title>A system for gene cloning and manipulation in the yeast Candida glabrata.</title>
        <authorList>
            <person name="Zhou P."/>
            <person name="Szczypka M.S."/>
            <person name="Young R.J."/>
            <person name="Thiele D.J."/>
        </authorList>
    </citation>
    <scope>NUCLEOTIDE SEQUENCE [GENOMIC DNA]</scope>
    <source>
        <strain>85/038</strain>
    </source>
</reference>
<reference key="2">
    <citation type="journal article" date="2004" name="Nature">
        <title>Genome evolution in yeasts.</title>
        <authorList>
            <person name="Dujon B."/>
            <person name="Sherman D."/>
            <person name="Fischer G."/>
            <person name="Durrens P."/>
            <person name="Casaregola S."/>
            <person name="Lafontaine I."/>
            <person name="de Montigny J."/>
            <person name="Marck C."/>
            <person name="Neuveglise C."/>
            <person name="Talla E."/>
            <person name="Goffard N."/>
            <person name="Frangeul L."/>
            <person name="Aigle M."/>
            <person name="Anthouard V."/>
            <person name="Babour A."/>
            <person name="Barbe V."/>
            <person name="Barnay S."/>
            <person name="Blanchin S."/>
            <person name="Beckerich J.-M."/>
            <person name="Beyne E."/>
            <person name="Bleykasten C."/>
            <person name="Boisrame A."/>
            <person name="Boyer J."/>
            <person name="Cattolico L."/>
            <person name="Confanioleri F."/>
            <person name="de Daruvar A."/>
            <person name="Despons L."/>
            <person name="Fabre E."/>
            <person name="Fairhead C."/>
            <person name="Ferry-Dumazet H."/>
            <person name="Groppi A."/>
            <person name="Hantraye F."/>
            <person name="Hennequin C."/>
            <person name="Jauniaux N."/>
            <person name="Joyet P."/>
            <person name="Kachouri R."/>
            <person name="Kerrest A."/>
            <person name="Koszul R."/>
            <person name="Lemaire M."/>
            <person name="Lesur I."/>
            <person name="Ma L."/>
            <person name="Muller H."/>
            <person name="Nicaud J.-M."/>
            <person name="Nikolski M."/>
            <person name="Oztas S."/>
            <person name="Ozier-Kalogeropoulos O."/>
            <person name="Pellenz S."/>
            <person name="Potier S."/>
            <person name="Richard G.-F."/>
            <person name="Straub M.-L."/>
            <person name="Suleau A."/>
            <person name="Swennen D."/>
            <person name="Tekaia F."/>
            <person name="Wesolowski-Louvel M."/>
            <person name="Westhof E."/>
            <person name="Wirth B."/>
            <person name="Zeniou-Meyer M."/>
            <person name="Zivanovic Y."/>
            <person name="Bolotin-Fukuhara M."/>
            <person name="Thierry A."/>
            <person name="Bouchier C."/>
            <person name="Caudron B."/>
            <person name="Scarpelli C."/>
            <person name="Gaillardin C."/>
            <person name="Weissenbach J."/>
            <person name="Wincker P."/>
            <person name="Souciet J.-L."/>
        </authorList>
    </citation>
    <scope>NUCLEOTIDE SEQUENCE [LARGE SCALE GENOMIC DNA]</scope>
    <source>
        <strain>ATCC 2001 / BCRC 20586 / JCM 3761 / NBRC 0622 / NRRL Y-65 / CBS 138</strain>
    </source>
</reference>
<gene>
    <name type="primary">URA3</name>
    <name type="ordered locus">CAGL0I03080g</name>
</gene>
<organism>
    <name type="scientific">Candida glabrata (strain ATCC 2001 / BCRC 20586 / JCM 3761 / NBRC 0622 / NRRL Y-65 / CBS 138)</name>
    <name type="common">Yeast</name>
    <name type="synonym">Nakaseomyces glabratus</name>
    <dbReference type="NCBI Taxonomy" id="284593"/>
    <lineage>
        <taxon>Eukaryota</taxon>
        <taxon>Fungi</taxon>
        <taxon>Dikarya</taxon>
        <taxon>Ascomycota</taxon>
        <taxon>Saccharomycotina</taxon>
        <taxon>Saccharomycetes</taxon>
        <taxon>Saccharomycetales</taxon>
        <taxon>Saccharomycetaceae</taxon>
        <taxon>Nakaseomyces</taxon>
    </lineage>
</organism>
<comment type="catalytic activity">
    <reaction evidence="2">
        <text>orotidine 5'-phosphate + H(+) = UMP + CO2</text>
        <dbReference type="Rhea" id="RHEA:11596"/>
        <dbReference type="ChEBI" id="CHEBI:15378"/>
        <dbReference type="ChEBI" id="CHEBI:16526"/>
        <dbReference type="ChEBI" id="CHEBI:57538"/>
        <dbReference type="ChEBI" id="CHEBI:57865"/>
        <dbReference type="EC" id="4.1.1.23"/>
    </reaction>
</comment>
<comment type="pathway">
    <text>Pyrimidine metabolism; UMP biosynthesis via de novo pathway; UMP from orotate: step 2/2.</text>
</comment>
<comment type="similarity">
    <text evidence="3">Belongs to the OMP decarboxylase family.</text>
</comment>
<protein>
    <recommendedName>
        <fullName>Orotidine 5'-phosphate decarboxylase</fullName>
        <ecNumber>4.1.1.23</ecNumber>
    </recommendedName>
    <alternativeName>
        <fullName>OMP decarboxylase</fullName>
        <shortName>OMPDCase</shortName>
        <shortName>OMPdecase</shortName>
    </alternativeName>
    <alternativeName>
        <fullName>Uridine 5'-monophosphate synthase</fullName>
        <shortName>UMP synthase</shortName>
    </alternativeName>
</protein>
<name>PYRF_CANGA</name>
<sequence length="265" mass="29054">MSSASYLQRAEAHPSPVASKLLKLMHEKKTNLCASLDVTTTSELLKLVDTLGPYICLLKTHVDILSDFSFENTVKPLKEMAAKHNFLIFEDRKFADIGNTVKLQYTSGVYKIAEWADITNAHGVTGQGIVTGLKQGAEETTNEPRGLLMLAELSSKGSLAHGEYTKGTVDIAKSDKDFVIGFIAQKDMGGRDEGFDWLIMTPGVGLDDKGDALGQQYRTVDEVFSTGTDIIIVGRGLFAKGRDPKTEGERYRKAGWDAYLKRIGN</sequence>
<dbReference type="EC" id="4.1.1.23"/>
<dbReference type="EMBL" id="L13661">
    <property type="protein sequence ID" value="AAA34325.1"/>
    <property type="molecule type" value="Genomic_DNA"/>
</dbReference>
<dbReference type="EMBL" id="CR380955">
    <property type="protein sequence ID" value="CAG60321.1"/>
    <property type="molecule type" value="Genomic_DNA"/>
</dbReference>
<dbReference type="RefSeq" id="XP_447384.1">
    <property type="nucleotide sequence ID" value="XM_447384.1"/>
</dbReference>
<dbReference type="SMR" id="P33283"/>
<dbReference type="FunCoup" id="P33283">
    <property type="interactions" value="1164"/>
</dbReference>
<dbReference type="STRING" id="284593.P33283"/>
<dbReference type="EnsemblFungi" id="CAGL0I03080g-T">
    <property type="protein sequence ID" value="CAGL0I03080g-T-p1"/>
    <property type="gene ID" value="CAGL0I03080g"/>
</dbReference>
<dbReference type="GeneID" id="2889164"/>
<dbReference type="KEGG" id="cgr:2889164"/>
<dbReference type="CGD" id="CAL0130376">
    <property type="gene designation" value="URA3"/>
</dbReference>
<dbReference type="VEuPathDB" id="FungiDB:B1J91_I03080g"/>
<dbReference type="VEuPathDB" id="FungiDB:CAGL0I03080g"/>
<dbReference type="eggNOG" id="KOG1377">
    <property type="taxonomic scope" value="Eukaryota"/>
</dbReference>
<dbReference type="HOGENOM" id="CLU_030821_0_0_1"/>
<dbReference type="InParanoid" id="P33283"/>
<dbReference type="OMA" id="CLIKTHI"/>
<dbReference type="UniPathway" id="UPA00070">
    <property type="reaction ID" value="UER00120"/>
</dbReference>
<dbReference type="Proteomes" id="UP000002428">
    <property type="component" value="Chromosome I"/>
</dbReference>
<dbReference type="GO" id="GO:0005829">
    <property type="term" value="C:cytosol"/>
    <property type="evidence" value="ECO:0000316"/>
    <property type="project" value="CGD"/>
</dbReference>
<dbReference type="GO" id="GO:0004590">
    <property type="term" value="F:orotidine-5'-phosphate decarboxylase activity"/>
    <property type="evidence" value="ECO:0000316"/>
    <property type="project" value="CGD"/>
</dbReference>
<dbReference type="GO" id="GO:0006207">
    <property type="term" value="P:'de novo' pyrimidine nucleobase biosynthetic process"/>
    <property type="evidence" value="ECO:0000316"/>
    <property type="project" value="CGD"/>
</dbReference>
<dbReference type="GO" id="GO:0044205">
    <property type="term" value="P:'de novo' UMP biosynthetic process"/>
    <property type="evidence" value="ECO:0007669"/>
    <property type="project" value="UniProtKB-UniPathway"/>
</dbReference>
<dbReference type="GO" id="GO:0046107">
    <property type="term" value="P:uracil biosynthetic process"/>
    <property type="evidence" value="ECO:0000315"/>
    <property type="project" value="CGD"/>
</dbReference>
<dbReference type="CDD" id="cd04725">
    <property type="entry name" value="OMP_decarboxylase_like"/>
    <property type="match status" value="1"/>
</dbReference>
<dbReference type="FunFam" id="3.20.20.70:FF:000114">
    <property type="entry name" value="Decarboxylase,orotidine phosphate"/>
    <property type="match status" value="1"/>
</dbReference>
<dbReference type="Gene3D" id="3.20.20.70">
    <property type="entry name" value="Aldolase class I"/>
    <property type="match status" value="1"/>
</dbReference>
<dbReference type="InterPro" id="IPR013785">
    <property type="entry name" value="Aldolase_TIM"/>
</dbReference>
<dbReference type="InterPro" id="IPR014732">
    <property type="entry name" value="OMPdecase"/>
</dbReference>
<dbReference type="InterPro" id="IPR018089">
    <property type="entry name" value="OMPdecase_AS"/>
</dbReference>
<dbReference type="InterPro" id="IPR001754">
    <property type="entry name" value="OMPdeCOase_dom"/>
</dbReference>
<dbReference type="InterPro" id="IPR011060">
    <property type="entry name" value="RibuloseP-bd_barrel"/>
</dbReference>
<dbReference type="NCBIfam" id="TIGR01740">
    <property type="entry name" value="pyrF"/>
    <property type="match status" value="1"/>
</dbReference>
<dbReference type="PANTHER" id="PTHR32119">
    <property type="entry name" value="OROTIDINE 5'-PHOSPHATE DECARBOXYLASE"/>
    <property type="match status" value="1"/>
</dbReference>
<dbReference type="PANTHER" id="PTHR32119:SF2">
    <property type="entry name" value="OROTIDINE 5'-PHOSPHATE DECARBOXYLASE"/>
    <property type="match status" value="1"/>
</dbReference>
<dbReference type="Pfam" id="PF00215">
    <property type="entry name" value="OMPdecase"/>
    <property type="match status" value="1"/>
</dbReference>
<dbReference type="SMART" id="SM00934">
    <property type="entry name" value="OMPdecase"/>
    <property type="match status" value="1"/>
</dbReference>
<dbReference type="SUPFAM" id="SSF51366">
    <property type="entry name" value="Ribulose-phoshate binding barrel"/>
    <property type="match status" value="1"/>
</dbReference>
<dbReference type="PROSITE" id="PS00156">
    <property type="entry name" value="OMPDECASE"/>
    <property type="match status" value="1"/>
</dbReference>
<accession>P33283</accession>
<evidence type="ECO:0000250" key="1"/>
<evidence type="ECO:0000255" key="2">
    <source>
        <dbReference type="PROSITE-ProRule" id="PRU10110"/>
    </source>
</evidence>
<evidence type="ECO:0000305" key="3"/>
<keyword id="KW-0210">Decarboxylase</keyword>
<keyword id="KW-0456">Lyase</keyword>
<keyword id="KW-0665">Pyrimidine biosynthesis</keyword>
<keyword id="KW-1185">Reference proteome</keyword>
<proteinExistence type="inferred from homology"/>